<keyword id="KW-1185">Reference proteome</keyword>
<reference key="1">
    <citation type="submission" date="2006-02" db="EMBL/GenBank/DDBJ databases">
        <authorList>
            <person name="Wistow G."/>
        </authorList>
    </citation>
    <scope>NUCLEOTIDE SEQUENCE [MRNA]</scope>
    <source>
        <tissue>Lens</tissue>
    </source>
</reference>
<accession>Q1ZZS1</accession>
<comment type="function">
    <text evidence="1">May act as a component of the cytoskeleton or as a chaperone for the reorganization of intermediate filament proteins during terminal differentiation in the lens. Does not seem to have enzymatic activity (By similarity).</text>
</comment>
<comment type="subunit">
    <text evidence="1">Dodecamer. Interacts with BFSP2 and VIM.</text>
</comment>
<comment type="similarity">
    <text evidence="5">Belongs to the glutamine synthetase family.</text>
</comment>
<sequence>MNDEGDLLQENTRDEGNETEASRMSKLRRTRKKVTKQHIFSTEVGEMDVSNSKERIRSQMVCHTLGNMSKPVVGPGSADSHLPQDDKDSENQTTVIKPSPLKTSASAPCSEFNTNSNHADNTWEDTQIPTTPHLSSRMKHIKQEMAKNHLQFVRFEATDLHGVSRSKSIPAHFFQEKVIHGVCMPRGYLELIPNPKDDEVDHIRATCFNSDIVLMPELSTFRVLPWAERTARVICDTFTVTGEPLLTSPRYIAKRQLSQLQDSGFSLLSAFIYDFCIFAVPEIINSKTISFPASTLLNNHDQPFIQELVDGLYHTGANVESFSSSTRPGQMEICFLPEFGISSADNAFTLRTGVKEVARKYNYIASFFIETGFCNSGILSHSLWDVDGKKNMFCSSSGIEELTITGKKWLAGLLKHSAALSCLMAPAVSCRKRYSKESKDLKESVPTTWGYNDNSCAFNIKCHGEKGTRIENKLGSATANPYLVLAATVAAGLDGLQSSDGVLASPGDSTDLYPSKPSEIPLKLEDALVALEEDQCLRQALGETFIRYFVAMKKYDLENEETDAERNKFLEYFI</sequence>
<feature type="chain" id="PRO_0000365069" description="Lengsin">
    <location>
        <begin position="1"/>
        <end position="574"/>
    </location>
</feature>
<feature type="domain" description="GS beta-grasp" evidence="2">
    <location>
        <begin position="148"/>
        <end position="242"/>
    </location>
</feature>
<feature type="domain" description="GS catalytic" evidence="3">
    <location>
        <begin position="249"/>
        <end position="574"/>
    </location>
</feature>
<feature type="region of interest" description="Disordered" evidence="4">
    <location>
        <begin position="1"/>
        <end position="36"/>
    </location>
</feature>
<feature type="region of interest" description="Disordered" evidence="4">
    <location>
        <begin position="66"/>
        <end position="131"/>
    </location>
</feature>
<feature type="compositionally biased region" description="Basic and acidic residues" evidence="4">
    <location>
        <begin position="11"/>
        <end position="23"/>
    </location>
</feature>
<feature type="compositionally biased region" description="Basic residues" evidence="4">
    <location>
        <begin position="25"/>
        <end position="36"/>
    </location>
</feature>
<feature type="compositionally biased region" description="Polar residues" evidence="4">
    <location>
        <begin position="91"/>
        <end position="131"/>
    </location>
</feature>
<name>LGSN_CANLF</name>
<organism>
    <name type="scientific">Canis lupus familiaris</name>
    <name type="common">Dog</name>
    <name type="synonym">Canis familiaris</name>
    <dbReference type="NCBI Taxonomy" id="9615"/>
    <lineage>
        <taxon>Eukaryota</taxon>
        <taxon>Metazoa</taxon>
        <taxon>Chordata</taxon>
        <taxon>Craniata</taxon>
        <taxon>Vertebrata</taxon>
        <taxon>Euteleostomi</taxon>
        <taxon>Mammalia</taxon>
        <taxon>Eutheria</taxon>
        <taxon>Laurasiatheria</taxon>
        <taxon>Carnivora</taxon>
        <taxon>Caniformia</taxon>
        <taxon>Canidae</taxon>
        <taxon>Canis</taxon>
    </lineage>
</organism>
<dbReference type="EMBL" id="DQ415892">
    <property type="protein sequence ID" value="ABD74632.1"/>
    <property type="molecule type" value="mRNA"/>
</dbReference>
<dbReference type="RefSeq" id="NP_001041568.1">
    <property type="nucleotide sequence ID" value="NM_001048103.1"/>
</dbReference>
<dbReference type="SMR" id="Q1ZZS1"/>
<dbReference type="FunCoup" id="Q1ZZS1">
    <property type="interactions" value="2"/>
</dbReference>
<dbReference type="STRING" id="9615.ENSCAFP00000062661"/>
<dbReference type="PaxDb" id="9612-ENSCAFP00000037830"/>
<dbReference type="Ensembl" id="ENSCAFT00845012846.1">
    <property type="protein sequence ID" value="ENSCAFP00845010011.1"/>
    <property type="gene ID" value="ENSCAFG00845007217.1"/>
</dbReference>
<dbReference type="GeneID" id="481862"/>
<dbReference type="KEGG" id="cfa:481862"/>
<dbReference type="CTD" id="51557"/>
<dbReference type="VEuPathDB" id="HostDB:ENSCAFG00845007217"/>
<dbReference type="VGNC" id="VGNC:42656">
    <property type="gene designation" value="LGSN"/>
</dbReference>
<dbReference type="eggNOG" id="KOG0683">
    <property type="taxonomic scope" value="Eukaryota"/>
</dbReference>
<dbReference type="GeneTree" id="ENSGT00390000013639"/>
<dbReference type="InParanoid" id="Q1ZZS1"/>
<dbReference type="OrthoDB" id="9950534at2759"/>
<dbReference type="Proteomes" id="UP000002254">
    <property type="component" value="Unplaced"/>
</dbReference>
<dbReference type="Proteomes" id="UP000694429">
    <property type="component" value="Unplaced"/>
</dbReference>
<dbReference type="Proteomes" id="UP000694542">
    <property type="component" value="Unplaced"/>
</dbReference>
<dbReference type="Proteomes" id="UP000805418">
    <property type="component" value="Chromosome 12"/>
</dbReference>
<dbReference type="GO" id="GO:0005737">
    <property type="term" value="C:cytoplasm"/>
    <property type="evidence" value="ECO:0000318"/>
    <property type="project" value="GO_Central"/>
</dbReference>
<dbReference type="GO" id="GO:0016020">
    <property type="term" value="C:membrane"/>
    <property type="evidence" value="ECO:0000318"/>
    <property type="project" value="GO_Central"/>
</dbReference>
<dbReference type="GO" id="GO:0003824">
    <property type="term" value="F:catalytic activity"/>
    <property type="evidence" value="ECO:0007669"/>
    <property type="project" value="InterPro"/>
</dbReference>
<dbReference type="FunFam" id="3.30.590.10:FF:000009">
    <property type="entry name" value="Lengsin, lens protein with glutamine synthetase domain"/>
    <property type="match status" value="1"/>
</dbReference>
<dbReference type="FunFam" id="3.10.20.70:FF:000007">
    <property type="entry name" value="LOW QUALITY PROTEIN: lengsin"/>
    <property type="match status" value="1"/>
</dbReference>
<dbReference type="Gene3D" id="3.10.20.70">
    <property type="entry name" value="Glutamine synthetase, N-terminal domain"/>
    <property type="match status" value="1"/>
</dbReference>
<dbReference type="Gene3D" id="3.30.590.10">
    <property type="entry name" value="Glutamine synthetase/guanido kinase, catalytic domain"/>
    <property type="match status" value="1"/>
</dbReference>
<dbReference type="InterPro" id="IPR008147">
    <property type="entry name" value="Gln_synt_N"/>
</dbReference>
<dbReference type="InterPro" id="IPR036651">
    <property type="entry name" value="Gln_synt_N_sf"/>
</dbReference>
<dbReference type="InterPro" id="IPR014746">
    <property type="entry name" value="Gln_synth/guanido_kin_cat_dom"/>
</dbReference>
<dbReference type="InterPro" id="IPR008146">
    <property type="entry name" value="Gln_synth_cat_dom"/>
</dbReference>
<dbReference type="PANTHER" id="PTHR43407">
    <property type="entry name" value="GLUTAMINE SYNTHETASE"/>
    <property type="match status" value="1"/>
</dbReference>
<dbReference type="PANTHER" id="PTHR43407:SF1">
    <property type="entry name" value="LENGSIN"/>
    <property type="match status" value="1"/>
</dbReference>
<dbReference type="Pfam" id="PF00120">
    <property type="entry name" value="Gln-synt_C"/>
    <property type="match status" value="1"/>
</dbReference>
<dbReference type="SMART" id="SM01230">
    <property type="entry name" value="Gln-synt_C"/>
    <property type="match status" value="1"/>
</dbReference>
<dbReference type="SUPFAM" id="SSF54368">
    <property type="entry name" value="Glutamine synthetase, N-terminal domain"/>
    <property type="match status" value="1"/>
</dbReference>
<dbReference type="SUPFAM" id="SSF55931">
    <property type="entry name" value="Glutamine synthetase/guanido kinase"/>
    <property type="match status" value="1"/>
</dbReference>
<dbReference type="PROSITE" id="PS51986">
    <property type="entry name" value="GS_BETA_GRASP"/>
    <property type="match status" value="1"/>
</dbReference>
<dbReference type="PROSITE" id="PS51987">
    <property type="entry name" value="GS_CATALYTIC"/>
    <property type="match status" value="1"/>
</dbReference>
<protein>
    <recommendedName>
        <fullName>Lengsin</fullName>
    </recommendedName>
    <alternativeName>
        <fullName>Glutamate-ammonia ligase domain-containing protein 1</fullName>
    </alternativeName>
</protein>
<evidence type="ECO:0000250" key="1"/>
<evidence type="ECO:0000255" key="2">
    <source>
        <dbReference type="PROSITE-ProRule" id="PRU01330"/>
    </source>
</evidence>
<evidence type="ECO:0000255" key="3">
    <source>
        <dbReference type="PROSITE-ProRule" id="PRU01331"/>
    </source>
</evidence>
<evidence type="ECO:0000256" key="4">
    <source>
        <dbReference type="SAM" id="MobiDB-lite"/>
    </source>
</evidence>
<evidence type="ECO:0000305" key="5"/>
<proteinExistence type="evidence at transcript level"/>
<gene>
    <name type="primary">LGSN</name>
    <name type="synonym">GLULD1</name>
    <name type="synonym">LGS</name>
</gene>